<sequence length="281" mass="32111">MPTYDNHHALKGLTLGQPTEYHDTYQPALLQAVPRRLNREPLGLYPDSLPFGGADIWTLYELSWLNSKGVPQVAVGEVVLDASSINLIESKSFKLYLNSFNQTKFANWGEVRQILERDLSACAAGKVSVALFRLHEIEGQPVGHFDGYCIDEQDIVIDSYAFDAGYLHNAVGNEIVEEQLVSHLLKSNCLITNQPDWGTVQISYRGPRIQREALLRYLVSFRQHNEFHEQCVERIFSDILRYCQPESLSVYARYTRRGGLDINPWRSNTHFTPGRSRLVRQ</sequence>
<reference key="1">
    <citation type="journal article" date="2008" name="Environ. Microbiol.">
        <title>The genome of Erwinia tasmaniensis strain Et1/99, a non-pathogenic bacterium in the genus Erwinia.</title>
        <authorList>
            <person name="Kube M."/>
            <person name="Migdoll A.M."/>
            <person name="Mueller I."/>
            <person name="Kuhl H."/>
            <person name="Beck A."/>
            <person name="Reinhardt R."/>
            <person name="Geider K."/>
        </authorList>
    </citation>
    <scope>NUCLEOTIDE SEQUENCE [LARGE SCALE GENOMIC DNA]</scope>
    <source>
        <strain>DSM 17950 / CFBP 7177 / CIP 109463 / NCPPB 4357 / Et1/99</strain>
    </source>
</reference>
<feature type="chain" id="PRO_1000213067" description="NADPH-dependent 7-cyano-7-deazaguanine reductase">
    <location>
        <begin position="1"/>
        <end position="281"/>
    </location>
</feature>
<feature type="active site" description="Thioimide intermediate" evidence="1">
    <location>
        <position position="189"/>
    </location>
</feature>
<feature type="active site" description="Proton donor" evidence="1">
    <location>
        <position position="196"/>
    </location>
</feature>
<feature type="binding site" evidence="1">
    <location>
        <begin position="88"/>
        <end position="90"/>
    </location>
    <ligand>
        <name>substrate</name>
    </ligand>
</feature>
<feature type="binding site" evidence="1">
    <location>
        <begin position="90"/>
        <end position="91"/>
    </location>
    <ligand>
        <name>NADPH</name>
        <dbReference type="ChEBI" id="CHEBI:57783"/>
    </ligand>
</feature>
<feature type="binding site" evidence="1">
    <location>
        <begin position="228"/>
        <end position="229"/>
    </location>
    <ligand>
        <name>substrate</name>
    </ligand>
</feature>
<feature type="binding site" evidence="1">
    <location>
        <begin position="257"/>
        <end position="258"/>
    </location>
    <ligand>
        <name>NADPH</name>
        <dbReference type="ChEBI" id="CHEBI:57783"/>
    </ligand>
</feature>
<organism>
    <name type="scientific">Erwinia tasmaniensis (strain DSM 17950 / CFBP 7177 / CIP 109463 / NCPPB 4357 / Et1/99)</name>
    <dbReference type="NCBI Taxonomy" id="465817"/>
    <lineage>
        <taxon>Bacteria</taxon>
        <taxon>Pseudomonadati</taxon>
        <taxon>Pseudomonadota</taxon>
        <taxon>Gammaproteobacteria</taxon>
        <taxon>Enterobacterales</taxon>
        <taxon>Erwiniaceae</taxon>
        <taxon>Erwinia</taxon>
    </lineage>
</organism>
<accession>B2VFX1</accession>
<keyword id="KW-0963">Cytoplasm</keyword>
<keyword id="KW-0521">NADP</keyword>
<keyword id="KW-0560">Oxidoreductase</keyword>
<keyword id="KW-0671">Queuosine biosynthesis</keyword>
<keyword id="KW-1185">Reference proteome</keyword>
<proteinExistence type="inferred from homology"/>
<comment type="function">
    <text evidence="1">Catalyzes the NADPH-dependent reduction of 7-cyano-7-deazaguanine (preQ0) to 7-aminomethyl-7-deazaguanine (preQ1).</text>
</comment>
<comment type="catalytic activity">
    <reaction evidence="1">
        <text>7-aminomethyl-7-carbaguanine + 2 NADP(+) = 7-cyano-7-deazaguanine + 2 NADPH + 3 H(+)</text>
        <dbReference type="Rhea" id="RHEA:13409"/>
        <dbReference type="ChEBI" id="CHEBI:15378"/>
        <dbReference type="ChEBI" id="CHEBI:45075"/>
        <dbReference type="ChEBI" id="CHEBI:57783"/>
        <dbReference type="ChEBI" id="CHEBI:58349"/>
        <dbReference type="ChEBI" id="CHEBI:58703"/>
        <dbReference type="EC" id="1.7.1.13"/>
    </reaction>
</comment>
<comment type="pathway">
    <text evidence="1">tRNA modification; tRNA-queuosine biosynthesis.</text>
</comment>
<comment type="subunit">
    <text evidence="1">Homodimer.</text>
</comment>
<comment type="subcellular location">
    <subcellularLocation>
        <location evidence="1">Cytoplasm</location>
    </subcellularLocation>
</comment>
<comment type="similarity">
    <text evidence="1">Belongs to the GTP cyclohydrolase I family. QueF type 2 subfamily.</text>
</comment>
<evidence type="ECO:0000255" key="1">
    <source>
        <dbReference type="HAMAP-Rule" id="MF_00817"/>
    </source>
</evidence>
<dbReference type="EC" id="1.7.1.13" evidence="1"/>
<dbReference type="EMBL" id="CU468135">
    <property type="protein sequence ID" value="CAO97777.1"/>
    <property type="molecule type" value="Genomic_DNA"/>
</dbReference>
<dbReference type="RefSeq" id="WP_012442434.1">
    <property type="nucleotide sequence ID" value="NC_010694.1"/>
</dbReference>
<dbReference type="SMR" id="B2VFX1"/>
<dbReference type="STRING" id="465817.ETA_27310"/>
<dbReference type="KEGG" id="eta:ETA_27310"/>
<dbReference type="eggNOG" id="COG0780">
    <property type="taxonomic scope" value="Bacteria"/>
</dbReference>
<dbReference type="eggNOG" id="COG2904">
    <property type="taxonomic scope" value="Bacteria"/>
</dbReference>
<dbReference type="HOGENOM" id="CLU_054738_0_0_6"/>
<dbReference type="OrthoDB" id="9789995at2"/>
<dbReference type="UniPathway" id="UPA00392"/>
<dbReference type="Proteomes" id="UP000001726">
    <property type="component" value="Chromosome"/>
</dbReference>
<dbReference type="GO" id="GO:0005737">
    <property type="term" value="C:cytoplasm"/>
    <property type="evidence" value="ECO:0007669"/>
    <property type="project" value="UniProtKB-SubCell"/>
</dbReference>
<dbReference type="GO" id="GO:0033739">
    <property type="term" value="F:preQ1 synthase activity"/>
    <property type="evidence" value="ECO:0007669"/>
    <property type="project" value="UniProtKB-UniRule"/>
</dbReference>
<dbReference type="GO" id="GO:0008616">
    <property type="term" value="P:queuosine biosynthetic process"/>
    <property type="evidence" value="ECO:0007669"/>
    <property type="project" value="UniProtKB-UniRule"/>
</dbReference>
<dbReference type="GO" id="GO:0006400">
    <property type="term" value="P:tRNA modification"/>
    <property type="evidence" value="ECO:0007669"/>
    <property type="project" value="UniProtKB-UniRule"/>
</dbReference>
<dbReference type="Gene3D" id="3.30.1130.10">
    <property type="match status" value="2"/>
</dbReference>
<dbReference type="HAMAP" id="MF_00817">
    <property type="entry name" value="QueF_type2"/>
    <property type="match status" value="1"/>
</dbReference>
<dbReference type="InterPro" id="IPR043133">
    <property type="entry name" value="GTP-CH-I_C/QueF"/>
</dbReference>
<dbReference type="InterPro" id="IPR050084">
    <property type="entry name" value="NADPH_dep_7-cyano-7-deazaG_red"/>
</dbReference>
<dbReference type="InterPro" id="IPR029500">
    <property type="entry name" value="QueF"/>
</dbReference>
<dbReference type="InterPro" id="IPR029139">
    <property type="entry name" value="QueF_N"/>
</dbReference>
<dbReference type="InterPro" id="IPR016428">
    <property type="entry name" value="QueF_type2"/>
</dbReference>
<dbReference type="NCBIfam" id="TIGR03138">
    <property type="entry name" value="QueF"/>
    <property type="match status" value="1"/>
</dbReference>
<dbReference type="PANTHER" id="PTHR34354">
    <property type="entry name" value="NADPH-DEPENDENT 7-CYANO-7-DEAZAGUANINE REDUCTASE"/>
    <property type="match status" value="1"/>
</dbReference>
<dbReference type="PANTHER" id="PTHR34354:SF1">
    <property type="entry name" value="NADPH-DEPENDENT 7-CYANO-7-DEAZAGUANINE REDUCTASE"/>
    <property type="match status" value="1"/>
</dbReference>
<dbReference type="Pfam" id="PF14489">
    <property type="entry name" value="QueF"/>
    <property type="match status" value="1"/>
</dbReference>
<dbReference type="Pfam" id="PF14819">
    <property type="entry name" value="QueF_N"/>
    <property type="match status" value="1"/>
</dbReference>
<dbReference type="PIRSF" id="PIRSF004750">
    <property type="entry name" value="Nitrile_oxidored_YqcD_prd"/>
    <property type="match status" value="1"/>
</dbReference>
<dbReference type="SUPFAM" id="SSF55620">
    <property type="entry name" value="Tetrahydrobiopterin biosynthesis enzymes-like"/>
    <property type="match status" value="1"/>
</dbReference>
<gene>
    <name evidence="1" type="primary">queF</name>
    <name type="ordered locus">ETA_27310</name>
</gene>
<name>QUEF_ERWT9</name>
<protein>
    <recommendedName>
        <fullName evidence="1">NADPH-dependent 7-cyano-7-deazaguanine reductase</fullName>
        <ecNumber evidence="1">1.7.1.13</ecNumber>
    </recommendedName>
    <alternativeName>
        <fullName evidence="1">7-cyano-7-carbaguanine reductase</fullName>
    </alternativeName>
    <alternativeName>
        <fullName evidence="1">NADPH-dependent nitrile oxidoreductase</fullName>
    </alternativeName>
    <alternativeName>
        <fullName evidence="1">PreQ(0) reductase</fullName>
    </alternativeName>
</protein>